<protein>
    <recommendedName>
        <fullName>Zinc finger protein 155</fullName>
    </recommendedName>
</protein>
<proteinExistence type="evidence at protein level"/>
<organism>
    <name type="scientific">Homo sapiens</name>
    <name type="common">Human</name>
    <dbReference type="NCBI Taxonomy" id="9606"/>
    <lineage>
        <taxon>Eukaryota</taxon>
        <taxon>Metazoa</taxon>
        <taxon>Chordata</taxon>
        <taxon>Craniata</taxon>
        <taxon>Vertebrata</taxon>
        <taxon>Euteleostomi</taxon>
        <taxon>Mammalia</taxon>
        <taxon>Eutheria</taxon>
        <taxon>Euarchontoglires</taxon>
        <taxon>Primates</taxon>
        <taxon>Haplorrhini</taxon>
        <taxon>Catarrhini</taxon>
        <taxon>Hominidae</taxon>
        <taxon>Homo</taxon>
    </lineage>
</organism>
<dbReference type="EMBL" id="AF187986">
    <property type="protein sequence ID" value="AAF04102.1"/>
    <property type="molecule type" value="mRNA"/>
</dbReference>
<dbReference type="EMBL" id="AC018725">
    <property type="protein sequence ID" value="AAF18684.1"/>
    <property type="molecule type" value="Genomic_DNA"/>
</dbReference>
<dbReference type="EMBL" id="AK297360">
    <property type="protein sequence ID" value="BAG59807.1"/>
    <property type="molecule type" value="mRNA"/>
</dbReference>
<dbReference type="EMBL" id="AK314510">
    <property type="protein sequence ID" value="BAG37110.1"/>
    <property type="molecule type" value="mRNA"/>
</dbReference>
<dbReference type="EMBL" id="AC006213">
    <property type="status" value="NOT_ANNOTATED_CDS"/>
    <property type="molecule type" value="Genomic_DNA"/>
</dbReference>
<dbReference type="EMBL" id="BC075050">
    <property type="protein sequence ID" value="AAH75050.1"/>
    <property type="molecule type" value="mRNA"/>
</dbReference>
<dbReference type="EMBL" id="BC075051">
    <property type="protein sequence ID" value="AAH75051.1"/>
    <property type="molecule type" value="mRNA"/>
</dbReference>
<dbReference type="EMBL" id="BC126377">
    <property type="protein sequence ID" value="AAI26378.1"/>
    <property type="molecule type" value="mRNA"/>
</dbReference>
<dbReference type="EMBL" id="BC130381">
    <property type="protein sequence ID" value="AAI30382.1"/>
    <property type="molecule type" value="mRNA"/>
</dbReference>
<dbReference type="EMBL" id="U09852">
    <property type="protein sequence ID" value="AAC50268.1"/>
    <property type="molecule type" value="mRNA"/>
</dbReference>
<dbReference type="CCDS" id="CCDS12634.1">
    <molecule id="Q12901-1"/>
</dbReference>
<dbReference type="CCDS" id="CCDS58668.1">
    <molecule id="Q12901-2"/>
</dbReference>
<dbReference type="PIR" id="I38620">
    <property type="entry name" value="I38620"/>
</dbReference>
<dbReference type="RefSeq" id="NP_001247415.2">
    <molecule id="Q12901-1"/>
    <property type="nucleotide sequence ID" value="NM_001260486.2"/>
</dbReference>
<dbReference type="RefSeq" id="NP_001247416.2">
    <molecule id="Q12901-1"/>
    <property type="nucleotide sequence ID" value="NM_001260487.2"/>
</dbReference>
<dbReference type="RefSeq" id="NP_001247417.2">
    <molecule id="Q12901-2"/>
    <property type="nucleotide sequence ID" value="NM_001260488.2"/>
</dbReference>
<dbReference type="RefSeq" id="NP_003436.3">
    <molecule id="Q12901-1"/>
    <property type="nucleotide sequence ID" value="NM_003445.3"/>
</dbReference>
<dbReference type="RefSeq" id="NP_932355.3">
    <molecule id="Q12901-1"/>
    <property type="nucleotide sequence ID" value="NM_198089.3"/>
</dbReference>
<dbReference type="RefSeq" id="XP_005259272.1">
    <property type="nucleotide sequence ID" value="XM_005259215.3"/>
</dbReference>
<dbReference type="RefSeq" id="XP_011525580.1">
    <molecule id="Q12901-2"/>
    <property type="nucleotide sequence ID" value="XM_011527278.4"/>
</dbReference>
<dbReference type="RefSeq" id="XP_011525581.1">
    <property type="nucleotide sequence ID" value="XM_011527279.2"/>
</dbReference>
<dbReference type="RefSeq" id="XP_016882737.1">
    <property type="nucleotide sequence ID" value="XM_017027248.1"/>
</dbReference>
<dbReference type="RefSeq" id="XP_024307462.1">
    <molecule id="Q12901-2"/>
    <property type="nucleotide sequence ID" value="XM_024451694.2"/>
</dbReference>
<dbReference type="RefSeq" id="XP_047295326.1">
    <molecule id="Q12901-2"/>
    <property type="nucleotide sequence ID" value="XM_047439370.1"/>
</dbReference>
<dbReference type="RefSeq" id="XP_047295327.1">
    <molecule id="Q12901-1"/>
    <property type="nucleotide sequence ID" value="XM_047439371.1"/>
</dbReference>
<dbReference type="RefSeq" id="XP_047295328.1">
    <molecule id="Q12901-2"/>
    <property type="nucleotide sequence ID" value="XM_047439372.1"/>
</dbReference>
<dbReference type="RefSeq" id="XP_047295329.1">
    <molecule id="Q12901-2"/>
    <property type="nucleotide sequence ID" value="XM_047439373.1"/>
</dbReference>
<dbReference type="SMR" id="Q12901"/>
<dbReference type="BioGRID" id="113505">
    <property type="interactions" value="9"/>
</dbReference>
<dbReference type="FunCoup" id="Q12901">
    <property type="interactions" value="76"/>
</dbReference>
<dbReference type="IntAct" id="Q12901">
    <property type="interactions" value="7"/>
</dbReference>
<dbReference type="STRING" id="9606.ENSP00000385163"/>
<dbReference type="GlyGen" id="Q12901">
    <property type="glycosylation" value="2 sites, 1 O-linked glycan (2 sites)"/>
</dbReference>
<dbReference type="iPTMnet" id="Q12901"/>
<dbReference type="PhosphoSitePlus" id="Q12901"/>
<dbReference type="BioMuta" id="ZNF155"/>
<dbReference type="DMDM" id="292495098"/>
<dbReference type="jPOST" id="Q12901"/>
<dbReference type="MassIVE" id="Q12901"/>
<dbReference type="PaxDb" id="9606-ENSP00000385163"/>
<dbReference type="PeptideAtlas" id="Q12901"/>
<dbReference type="ProteomicsDB" id="59010">
    <molecule id="Q12901-1"/>
</dbReference>
<dbReference type="Pumba" id="Q12901"/>
<dbReference type="Antibodypedia" id="841">
    <property type="antibodies" value="110 antibodies from 18 providers"/>
</dbReference>
<dbReference type="DNASU" id="7711"/>
<dbReference type="Ensembl" id="ENST00000270014.7">
    <molecule id="Q12901-1"/>
    <property type="protein sequence ID" value="ENSP00000270014.1"/>
    <property type="gene ID" value="ENSG00000204920.11"/>
</dbReference>
<dbReference type="Ensembl" id="ENST00000407951.6">
    <molecule id="Q12901-2"/>
    <property type="protein sequence ID" value="ENSP00000385163.2"/>
    <property type="gene ID" value="ENSG00000204920.11"/>
</dbReference>
<dbReference type="Ensembl" id="ENST00000590615.5">
    <molecule id="Q12901-1"/>
    <property type="protein sequence ID" value="ENSP00000465691.1"/>
    <property type="gene ID" value="ENSG00000204920.11"/>
</dbReference>
<dbReference type="Ensembl" id="ENST00000611002.4">
    <molecule id="Q12901-1"/>
    <property type="protein sequence ID" value="ENSP00000481677.1"/>
    <property type="gene ID" value="ENSG00000204920.11"/>
</dbReference>
<dbReference type="GeneID" id="7711"/>
<dbReference type="KEGG" id="hsa:7711"/>
<dbReference type="MANE-Select" id="ENST00000270014.7">
    <property type="protein sequence ID" value="ENSP00000270014.1"/>
    <property type="RefSeq nucleotide sequence ID" value="NM_198089.3"/>
    <property type="RefSeq protein sequence ID" value="NP_932355.3"/>
</dbReference>
<dbReference type="UCSC" id="uc002oxy.3">
    <molecule id="Q12901-1"/>
    <property type="organism name" value="human"/>
</dbReference>
<dbReference type="AGR" id="HGNC:12940"/>
<dbReference type="CTD" id="7711"/>
<dbReference type="DisGeNET" id="7711"/>
<dbReference type="GeneCards" id="ZNF155"/>
<dbReference type="HGNC" id="HGNC:12940">
    <property type="gene designation" value="ZNF155"/>
</dbReference>
<dbReference type="HPA" id="ENSG00000204920">
    <property type="expression patterns" value="Low tissue specificity"/>
</dbReference>
<dbReference type="MIM" id="604086">
    <property type="type" value="gene"/>
</dbReference>
<dbReference type="neXtProt" id="NX_Q12901"/>
<dbReference type="PharmGKB" id="PA37524"/>
<dbReference type="VEuPathDB" id="HostDB:ENSG00000204920"/>
<dbReference type="eggNOG" id="KOG1721">
    <property type="taxonomic scope" value="Eukaryota"/>
</dbReference>
<dbReference type="GeneTree" id="ENSGT00940000163825"/>
<dbReference type="HOGENOM" id="CLU_002678_31_5_1"/>
<dbReference type="InParanoid" id="Q12901"/>
<dbReference type="OMA" id="HASDECG"/>
<dbReference type="OrthoDB" id="9411774at2759"/>
<dbReference type="PAN-GO" id="Q12901">
    <property type="GO annotations" value="4 GO annotations based on evolutionary models"/>
</dbReference>
<dbReference type="PhylomeDB" id="Q12901"/>
<dbReference type="TreeFam" id="TF341885"/>
<dbReference type="PathwayCommons" id="Q12901"/>
<dbReference type="Reactome" id="R-HSA-212436">
    <property type="pathway name" value="Generic Transcription Pathway"/>
</dbReference>
<dbReference type="SignaLink" id="Q12901"/>
<dbReference type="BioGRID-ORCS" id="7711">
    <property type="hits" value="23 hits in 1170 CRISPR screens"/>
</dbReference>
<dbReference type="ChiTaRS" id="ZNF155">
    <property type="organism name" value="human"/>
</dbReference>
<dbReference type="GenomeRNAi" id="7711"/>
<dbReference type="Pharos" id="Q12901">
    <property type="development level" value="Tdark"/>
</dbReference>
<dbReference type="PRO" id="PR:Q12901"/>
<dbReference type="Proteomes" id="UP000005640">
    <property type="component" value="Chromosome 19"/>
</dbReference>
<dbReference type="RNAct" id="Q12901">
    <property type="molecule type" value="protein"/>
</dbReference>
<dbReference type="Bgee" id="ENSG00000204920">
    <property type="expression patterns" value="Expressed in secondary oocyte and 127 other cell types or tissues"/>
</dbReference>
<dbReference type="ExpressionAtlas" id="Q12901">
    <property type="expression patterns" value="baseline and differential"/>
</dbReference>
<dbReference type="GO" id="GO:0005634">
    <property type="term" value="C:nucleus"/>
    <property type="evidence" value="ECO:0007669"/>
    <property type="project" value="UniProtKB-SubCell"/>
</dbReference>
<dbReference type="GO" id="GO:0003677">
    <property type="term" value="F:DNA binding"/>
    <property type="evidence" value="ECO:0007669"/>
    <property type="project" value="UniProtKB-KW"/>
</dbReference>
<dbReference type="GO" id="GO:0003700">
    <property type="term" value="F:DNA-binding transcription factor activity"/>
    <property type="evidence" value="ECO:0000303"/>
    <property type="project" value="ARUK-UCL"/>
</dbReference>
<dbReference type="GO" id="GO:0008270">
    <property type="term" value="F:zinc ion binding"/>
    <property type="evidence" value="ECO:0007669"/>
    <property type="project" value="UniProtKB-KW"/>
</dbReference>
<dbReference type="CDD" id="cd07765">
    <property type="entry name" value="KRAB_A-box"/>
    <property type="match status" value="1"/>
</dbReference>
<dbReference type="FunFam" id="3.30.160.60:FF:000557">
    <property type="entry name" value="zinc finger and SCAN domain-containing protein 29"/>
    <property type="match status" value="1"/>
</dbReference>
<dbReference type="FunFam" id="3.30.160.60:FF:001313">
    <property type="entry name" value="Zinc finger protein 155"/>
    <property type="match status" value="1"/>
</dbReference>
<dbReference type="FunFam" id="3.30.160.60:FF:001722">
    <property type="entry name" value="Zinc finger protein 155"/>
    <property type="match status" value="1"/>
</dbReference>
<dbReference type="FunFam" id="3.30.160.60:FF:001597">
    <property type="entry name" value="Zinc finger protein 222"/>
    <property type="match status" value="1"/>
</dbReference>
<dbReference type="FunFam" id="3.30.160.60:FF:002239">
    <property type="entry name" value="Zinc finger protein 226"/>
    <property type="match status" value="1"/>
</dbReference>
<dbReference type="FunFam" id="3.30.160.60:FF:000623">
    <property type="entry name" value="Zinc finger protein 234"/>
    <property type="match status" value="2"/>
</dbReference>
<dbReference type="FunFam" id="3.30.160.60:FF:000269">
    <property type="entry name" value="Zinc finger protein 287"/>
    <property type="match status" value="1"/>
</dbReference>
<dbReference type="FunFam" id="3.30.160.60:FF:002153">
    <property type="entry name" value="Zinc finger protein 30"/>
    <property type="match status" value="1"/>
</dbReference>
<dbReference type="FunFam" id="3.30.160.60:FF:001286">
    <property type="entry name" value="Zinc finger protein 485"/>
    <property type="match status" value="1"/>
</dbReference>
<dbReference type="FunFam" id="3.30.160.60:FF:002331">
    <property type="entry name" value="Zinc finger protein 672"/>
    <property type="match status" value="1"/>
</dbReference>
<dbReference type="Gene3D" id="6.10.140.140">
    <property type="match status" value="1"/>
</dbReference>
<dbReference type="Gene3D" id="3.30.160.60">
    <property type="entry name" value="Classic Zinc Finger"/>
    <property type="match status" value="12"/>
</dbReference>
<dbReference type="InterPro" id="IPR050752">
    <property type="entry name" value="C2H2-ZF_domain"/>
</dbReference>
<dbReference type="InterPro" id="IPR001909">
    <property type="entry name" value="KRAB"/>
</dbReference>
<dbReference type="InterPro" id="IPR036051">
    <property type="entry name" value="KRAB_dom_sf"/>
</dbReference>
<dbReference type="InterPro" id="IPR036236">
    <property type="entry name" value="Znf_C2H2_sf"/>
</dbReference>
<dbReference type="InterPro" id="IPR013087">
    <property type="entry name" value="Znf_C2H2_type"/>
</dbReference>
<dbReference type="PANTHER" id="PTHR24384">
    <property type="entry name" value="FINGER PUTATIVE TRANSCRIPTION FACTOR FAMILY-RELATED"/>
    <property type="match status" value="1"/>
</dbReference>
<dbReference type="PANTHER" id="PTHR24384:SF246">
    <property type="entry name" value="GENE, 19965-RELATED"/>
    <property type="match status" value="1"/>
</dbReference>
<dbReference type="Pfam" id="PF01352">
    <property type="entry name" value="KRAB"/>
    <property type="match status" value="1"/>
</dbReference>
<dbReference type="Pfam" id="PF00096">
    <property type="entry name" value="zf-C2H2"/>
    <property type="match status" value="10"/>
</dbReference>
<dbReference type="SMART" id="SM00349">
    <property type="entry name" value="KRAB"/>
    <property type="match status" value="1"/>
</dbReference>
<dbReference type="SMART" id="SM00355">
    <property type="entry name" value="ZnF_C2H2"/>
    <property type="match status" value="11"/>
</dbReference>
<dbReference type="SUPFAM" id="SSF57667">
    <property type="entry name" value="beta-beta-alpha zinc fingers"/>
    <property type="match status" value="7"/>
</dbReference>
<dbReference type="SUPFAM" id="SSF109640">
    <property type="entry name" value="KRAB domain (Kruppel-associated box)"/>
    <property type="match status" value="1"/>
</dbReference>
<dbReference type="PROSITE" id="PS50805">
    <property type="entry name" value="KRAB"/>
    <property type="match status" value="1"/>
</dbReference>
<dbReference type="PROSITE" id="PS00028">
    <property type="entry name" value="ZINC_FINGER_C2H2_1"/>
    <property type="match status" value="11"/>
</dbReference>
<dbReference type="PROSITE" id="PS50157">
    <property type="entry name" value="ZINC_FINGER_C2H2_2"/>
    <property type="match status" value="12"/>
</dbReference>
<gene>
    <name type="primary">ZNF155</name>
</gene>
<keyword id="KW-0025">Alternative splicing</keyword>
<keyword id="KW-0238">DNA-binding</keyword>
<keyword id="KW-0479">Metal-binding</keyword>
<keyword id="KW-0539">Nucleus</keyword>
<keyword id="KW-1267">Proteomics identification</keyword>
<keyword id="KW-1185">Reference proteome</keyword>
<keyword id="KW-0677">Repeat</keyword>
<keyword id="KW-0804">Transcription</keyword>
<keyword id="KW-0805">Transcription regulation</keyword>
<keyword id="KW-0862">Zinc</keyword>
<keyword id="KW-0863">Zinc-finger</keyword>
<feature type="chain" id="PRO_0000047431" description="Zinc finger protein 155">
    <location>
        <begin position="1"/>
        <end position="538"/>
    </location>
</feature>
<feature type="domain" description="KRAB" evidence="2">
    <location>
        <begin position="8"/>
        <end position="78"/>
    </location>
</feature>
<feature type="zinc finger region" description="C2H2-type 1" evidence="1">
    <location>
        <begin position="176"/>
        <end position="198"/>
    </location>
</feature>
<feature type="zinc finger region" description="C2H2-type 2" evidence="1">
    <location>
        <begin position="204"/>
        <end position="226"/>
    </location>
</feature>
<feature type="zinc finger region" description="C2H2-type 3" evidence="1">
    <location>
        <begin position="232"/>
        <end position="254"/>
    </location>
</feature>
<feature type="zinc finger region" description="C2H2-type 4" evidence="1">
    <location>
        <begin position="260"/>
        <end position="282"/>
    </location>
</feature>
<feature type="zinc finger region" description="C2H2-type 5" evidence="1">
    <location>
        <begin position="288"/>
        <end position="310"/>
    </location>
</feature>
<feature type="zinc finger region" description="C2H2-type 6" evidence="1">
    <location>
        <begin position="316"/>
        <end position="338"/>
    </location>
</feature>
<feature type="zinc finger region" description="C2H2-type 7" evidence="1">
    <location>
        <begin position="344"/>
        <end position="366"/>
    </location>
</feature>
<feature type="zinc finger region" description="C2H2-type 8" evidence="1">
    <location>
        <begin position="372"/>
        <end position="394"/>
    </location>
</feature>
<feature type="zinc finger region" description="C2H2-type 9" evidence="1">
    <location>
        <begin position="400"/>
        <end position="422"/>
    </location>
</feature>
<feature type="zinc finger region" description="C2H2-type 10" evidence="1">
    <location>
        <begin position="428"/>
        <end position="450"/>
    </location>
</feature>
<feature type="zinc finger region" description="C2H2-type 11" evidence="1">
    <location>
        <begin position="456"/>
        <end position="478"/>
    </location>
</feature>
<feature type="zinc finger region" description="C2H2-type 12; degenerate" evidence="1">
    <location>
        <begin position="484"/>
        <end position="506"/>
    </location>
</feature>
<feature type="splice variant" id="VSP_047207" description="In isoform 2." evidence="8">
    <original>MTTFK</original>
    <variation>MIKRSKVLVFCSKIME</variation>
    <location>
        <begin position="1"/>
        <end position="5"/>
    </location>
</feature>
<feature type="sequence variant" id="VAR_060272" description="In dbSNP:rs398235." evidence="3 4 5 7">
    <original>I</original>
    <variation>F</variation>
    <location>
        <position position="157"/>
    </location>
</feature>
<feature type="sequence variant" id="VAR_069362" description="In dbSNP:rs58537897." evidence="4">
    <original>P</original>
    <variation>L</variation>
    <location>
        <position position="231"/>
    </location>
</feature>
<feature type="sequence variant" id="VAR_060273" description="In dbSNP:rs448921." evidence="3 4 5 7">
    <original>R</original>
    <variation>H</variation>
    <location>
        <position position="251"/>
    </location>
</feature>
<feature type="sequence variant" id="VAR_057399" description="In dbSNP:rs2302411.">
    <original>K</original>
    <variation>R</variation>
    <location>
        <position position="379"/>
    </location>
</feature>
<feature type="sequence variant" id="VAR_035571" description="In a colorectal cancer sample; somatic mutation; dbSNP:rs1345352474." evidence="6">
    <original>H</original>
    <variation>R</variation>
    <location>
        <position position="474"/>
    </location>
</feature>
<feature type="sequence conflict" description="In Ref. 1; AAF04102." evidence="9" ref="1">
    <original>L</original>
    <variation>S</variation>
    <location>
        <position position="169"/>
    </location>
</feature>
<feature type="sequence conflict" description="In Ref. 3; BAG59807." evidence="9" ref="3">
    <original>D</original>
    <variation>G</variation>
    <location>
        <position position="322"/>
    </location>
</feature>
<feature type="sequence conflict" description="In Ref. 6; AAC50268." evidence="9" ref="6">
    <original>H</original>
    <variation>K</variation>
    <location>
        <position position="326"/>
    </location>
</feature>
<feature type="sequence conflict" description="In Ref. 3; BAG59807." evidence="9" ref="3">
    <original>K</original>
    <variation>T</variation>
    <location>
        <position position="351"/>
    </location>
</feature>
<feature type="sequence conflict" description="In Ref. 3; BAG59807." evidence="9" ref="3">
    <original>P</original>
    <variation>S</variation>
    <location>
        <position position="427"/>
    </location>
</feature>
<feature type="sequence conflict" description="In Ref. 6; AAC50268." evidence="9" ref="6">
    <original>KN</original>
    <variation>RT</variation>
    <location>
        <begin position="463"/>
        <end position="464"/>
    </location>
</feature>
<name>ZN155_HUMAN</name>
<comment type="function">
    <text>May be involved in transcriptional regulation.</text>
</comment>
<comment type="interaction">
    <interactant intactId="EBI-10747670">
        <id>Q12901</id>
    </interactant>
    <interactant intactId="EBI-748961">
        <id>O95273</id>
        <label>CCNDBP1</label>
    </interactant>
    <organismsDiffer>false</organismsDiffer>
    <experiments>3</experiments>
</comment>
<comment type="interaction">
    <interactant intactId="EBI-10747670">
        <id>Q12901</id>
    </interactant>
    <interactant intactId="EBI-5916454">
        <id>A6NEM1</id>
        <label>GOLGA6L9</label>
    </interactant>
    <organismsDiffer>false</organismsDiffer>
    <experiments>3</experiments>
</comment>
<comment type="interaction">
    <interactant intactId="EBI-10747670">
        <id>Q12901</id>
    </interactant>
    <interactant intactId="EBI-12012928">
        <id>P60371</id>
        <label>KRTAP10-6</label>
    </interactant>
    <organismsDiffer>false</organismsDiffer>
    <experiments>3</experiments>
</comment>
<comment type="interaction">
    <interactant intactId="EBI-10747670">
        <id>Q12901</id>
    </interactant>
    <interactant intactId="EBI-724076">
        <id>Q99750</id>
        <label>MDFI</label>
    </interactant>
    <organismsDiffer>false</organismsDiffer>
    <experiments>3</experiments>
</comment>
<comment type="interaction">
    <interactant intactId="EBI-10227379">
        <id>Q12901-2</id>
    </interactant>
    <interactant intactId="EBI-10172290">
        <id>P60409</id>
        <label>KRTAP10-7</label>
    </interactant>
    <organismsDiffer>false</organismsDiffer>
    <experiments>3</experiments>
</comment>
<comment type="interaction">
    <interactant intactId="EBI-10227379">
        <id>Q12901-2</id>
    </interactant>
    <interactant intactId="EBI-10172052">
        <id>P60411</id>
        <label>KRTAP10-9</label>
    </interactant>
    <organismsDiffer>false</organismsDiffer>
    <experiments>3</experiments>
</comment>
<comment type="interaction">
    <interactant intactId="EBI-10227379">
        <id>Q12901-2</id>
    </interactant>
    <interactant intactId="EBI-724076">
        <id>Q99750</id>
        <label>MDFI</label>
    </interactant>
    <organismsDiffer>false</organismsDiffer>
    <experiments>3</experiments>
</comment>
<comment type="subcellular location">
    <subcellularLocation>
        <location evidence="9">Nucleus</location>
    </subcellularLocation>
</comment>
<comment type="alternative products">
    <event type="alternative splicing"/>
    <isoform>
        <id>Q12901-1</id>
        <name>1</name>
        <sequence type="displayed"/>
    </isoform>
    <isoform>
        <id>Q12901-2</id>
        <name>2</name>
        <sequence type="described" ref="VSP_047207"/>
    </isoform>
</comment>
<comment type="similarity">
    <text evidence="9">Belongs to the krueppel C2H2-type zinc-finger protein family.</text>
</comment>
<reference key="1">
    <citation type="journal article" date="2003" name="Genome Res.">
        <title>Differential expansion of zinc-finger transcription factor loci in homologous human and mouse gene clusters.</title>
        <authorList>
            <person name="Shannon M."/>
            <person name="Hamilton A.T."/>
            <person name="Gordon L."/>
            <person name="Branscomb E."/>
            <person name="Stubbs L."/>
        </authorList>
    </citation>
    <scope>NUCLEOTIDE SEQUENCE [MRNA] (ISOFORM 1)</scope>
    <scope>VARIANTS PHE-157 AND HIS-251</scope>
</reference>
<reference key="2">
    <citation type="submission" date="1999-12" db="EMBL/GenBank/DDBJ databases">
        <title>Sequence analysis of a 1Mb region in 19q13.2 containing a zinc finger gene cluster.</title>
        <authorList>
            <person name="Kodoyianni V."/>
            <person name="Ge Y."/>
            <person name="Westphall M.S."/>
            <person name="Berggren W.T."/>
            <person name="Severin J."/>
            <person name="Krummel G.K."/>
            <person name="Gordon L."/>
            <person name="Shannon M."/>
            <person name="Olsen A.S."/>
            <person name="Smith L.M."/>
        </authorList>
    </citation>
    <scope>NUCLEOTIDE SEQUENCE [GENOMIC DNA]</scope>
    <scope>VARIANTS PHE-157 AND HIS-251</scope>
</reference>
<reference key="3">
    <citation type="journal article" date="2004" name="Nat. Genet.">
        <title>Complete sequencing and characterization of 21,243 full-length human cDNAs.</title>
        <authorList>
            <person name="Ota T."/>
            <person name="Suzuki Y."/>
            <person name="Nishikawa T."/>
            <person name="Otsuki T."/>
            <person name="Sugiyama T."/>
            <person name="Irie R."/>
            <person name="Wakamatsu A."/>
            <person name="Hayashi K."/>
            <person name="Sato H."/>
            <person name="Nagai K."/>
            <person name="Kimura K."/>
            <person name="Makita H."/>
            <person name="Sekine M."/>
            <person name="Obayashi M."/>
            <person name="Nishi T."/>
            <person name="Shibahara T."/>
            <person name="Tanaka T."/>
            <person name="Ishii S."/>
            <person name="Yamamoto J."/>
            <person name="Saito K."/>
            <person name="Kawai Y."/>
            <person name="Isono Y."/>
            <person name="Nakamura Y."/>
            <person name="Nagahari K."/>
            <person name="Murakami K."/>
            <person name="Yasuda T."/>
            <person name="Iwayanagi T."/>
            <person name="Wagatsuma M."/>
            <person name="Shiratori A."/>
            <person name="Sudo H."/>
            <person name="Hosoiri T."/>
            <person name="Kaku Y."/>
            <person name="Kodaira H."/>
            <person name="Kondo H."/>
            <person name="Sugawara M."/>
            <person name="Takahashi M."/>
            <person name="Kanda K."/>
            <person name="Yokoi T."/>
            <person name="Furuya T."/>
            <person name="Kikkawa E."/>
            <person name="Omura Y."/>
            <person name="Abe K."/>
            <person name="Kamihara K."/>
            <person name="Katsuta N."/>
            <person name="Sato K."/>
            <person name="Tanikawa M."/>
            <person name="Yamazaki M."/>
            <person name="Ninomiya K."/>
            <person name="Ishibashi T."/>
            <person name="Yamashita H."/>
            <person name="Murakawa K."/>
            <person name="Fujimori K."/>
            <person name="Tanai H."/>
            <person name="Kimata M."/>
            <person name="Watanabe M."/>
            <person name="Hiraoka S."/>
            <person name="Chiba Y."/>
            <person name="Ishida S."/>
            <person name="Ono Y."/>
            <person name="Takiguchi S."/>
            <person name="Watanabe S."/>
            <person name="Yosida M."/>
            <person name="Hotuta T."/>
            <person name="Kusano J."/>
            <person name="Kanehori K."/>
            <person name="Takahashi-Fujii A."/>
            <person name="Hara H."/>
            <person name="Tanase T.-O."/>
            <person name="Nomura Y."/>
            <person name="Togiya S."/>
            <person name="Komai F."/>
            <person name="Hara R."/>
            <person name="Takeuchi K."/>
            <person name="Arita M."/>
            <person name="Imose N."/>
            <person name="Musashino K."/>
            <person name="Yuuki H."/>
            <person name="Oshima A."/>
            <person name="Sasaki N."/>
            <person name="Aotsuka S."/>
            <person name="Yoshikawa Y."/>
            <person name="Matsunawa H."/>
            <person name="Ichihara T."/>
            <person name="Shiohata N."/>
            <person name="Sano S."/>
            <person name="Moriya S."/>
            <person name="Momiyama H."/>
            <person name="Satoh N."/>
            <person name="Takami S."/>
            <person name="Terashima Y."/>
            <person name="Suzuki O."/>
            <person name="Nakagawa S."/>
            <person name="Senoh A."/>
            <person name="Mizoguchi H."/>
            <person name="Goto Y."/>
            <person name="Shimizu F."/>
            <person name="Wakebe H."/>
            <person name="Hishigaki H."/>
            <person name="Watanabe T."/>
            <person name="Sugiyama A."/>
            <person name="Takemoto M."/>
            <person name="Kawakami B."/>
            <person name="Yamazaki M."/>
            <person name="Watanabe K."/>
            <person name="Kumagai A."/>
            <person name="Itakura S."/>
            <person name="Fukuzumi Y."/>
            <person name="Fujimori Y."/>
            <person name="Komiyama M."/>
            <person name="Tashiro H."/>
            <person name="Tanigami A."/>
            <person name="Fujiwara T."/>
            <person name="Ono T."/>
            <person name="Yamada K."/>
            <person name="Fujii Y."/>
            <person name="Ozaki K."/>
            <person name="Hirao M."/>
            <person name="Ohmori Y."/>
            <person name="Kawabata A."/>
            <person name="Hikiji T."/>
            <person name="Kobatake N."/>
            <person name="Inagaki H."/>
            <person name="Ikema Y."/>
            <person name="Okamoto S."/>
            <person name="Okitani R."/>
            <person name="Kawakami T."/>
            <person name="Noguchi S."/>
            <person name="Itoh T."/>
            <person name="Shigeta K."/>
            <person name="Senba T."/>
            <person name="Matsumura K."/>
            <person name="Nakajima Y."/>
            <person name="Mizuno T."/>
            <person name="Morinaga M."/>
            <person name="Sasaki M."/>
            <person name="Togashi T."/>
            <person name="Oyama M."/>
            <person name="Hata H."/>
            <person name="Watanabe M."/>
            <person name="Komatsu T."/>
            <person name="Mizushima-Sugano J."/>
            <person name="Satoh T."/>
            <person name="Shirai Y."/>
            <person name="Takahashi Y."/>
            <person name="Nakagawa K."/>
            <person name="Okumura K."/>
            <person name="Nagase T."/>
            <person name="Nomura N."/>
            <person name="Kikuchi H."/>
            <person name="Masuho Y."/>
            <person name="Yamashita R."/>
            <person name="Nakai K."/>
            <person name="Yada T."/>
            <person name="Nakamura Y."/>
            <person name="Ohara O."/>
            <person name="Isogai T."/>
            <person name="Sugano S."/>
        </authorList>
    </citation>
    <scope>NUCLEOTIDE SEQUENCE [LARGE SCALE MRNA] (ISOFORMS 1 AND 2)</scope>
    <scope>VARIANTS PHE-157; LEU-231 AND HIS-251</scope>
    <source>
        <tissue>Brain</tissue>
    </source>
</reference>
<reference key="4">
    <citation type="journal article" date="2004" name="Nature">
        <title>The DNA sequence and biology of human chromosome 19.</title>
        <authorList>
            <person name="Grimwood J."/>
            <person name="Gordon L.A."/>
            <person name="Olsen A.S."/>
            <person name="Terry A."/>
            <person name="Schmutz J."/>
            <person name="Lamerdin J.E."/>
            <person name="Hellsten U."/>
            <person name="Goodstein D."/>
            <person name="Couronne O."/>
            <person name="Tran-Gyamfi M."/>
            <person name="Aerts A."/>
            <person name="Altherr M."/>
            <person name="Ashworth L."/>
            <person name="Bajorek E."/>
            <person name="Black S."/>
            <person name="Branscomb E."/>
            <person name="Caenepeel S."/>
            <person name="Carrano A.V."/>
            <person name="Caoile C."/>
            <person name="Chan Y.M."/>
            <person name="Christensen M."/>
            <person name="Cleland C.A."/>
            <person name="Copeland A."/>
            <person name="Dalin E."/>
            <person name="Dehal P."/>
            <person name="Denys M."/>
            <person name="Detter J.C."/>
            <person name="Escobar J."/>
            <person name="Flowers D."/>
            <person name="Fotopulos D."/>
            <person name="Garcia C."/>
            <person name="Georgescu A.M."/>
            <person name="Glavina T."/>
            <person name="Gomez M."/>
            <person name="Gonzales E."/>
            <person name="Groza M."/>
            <person name="Hammon N."/>
            <person name="Hawkins T."/>
            <person name="Haydu L."/>
            <person name="Ho I."/>
            <person name="Huang W."/>
            <person name="Israni S."/>
            <person name="Jett J."/>
            <person name="Kadner K."/>
            <person name="Kimball H."/>
            <person name="Kobayashi A."/>
            <person name="Larionov V."/>
            <person name="Leem S.-H."/>
            <person name="Lopez F."/>
            <person name="Lou Y."/>
            <person name="Lowry S."/>
            <person name="Malfatti S."/>
            <person name="Martinez D."/>
            <person name="McCready P.M."/>
            <person name="Medina C."/>
            <person name="Morgan J."/>
            <person name="Nelson K."/>
            <person name="Nolan M."/>
            <person name="Ovcharenko I."/>
            <person name="Pitluck S."/>
            <person name="Pollard M."/>
            <person name="Popkie A.P."/>
            <person name="Predki P."/>
            <person name="Quan G."/>
            <person name="Ramirez L."/>
            <person name="Rash S."/>
            <person name="Retterer J."/>
            <person name="Rodriguez A."/>
            <person name="Rogers S."/>
            <person name="Salamov A."/>
            <person name="Salazar A."/>
            <person name="She X."/>
            <person name="Smith D."/>
            <person name="Slezak T."/>
            <person name="Solovyev V."/>
            <person name="Thayer N."/>
            <person name="Tice H."/>
            <person name="Tsai M."/>
            <person name="Ustaszewska A."/>
            <person name="Vo N."/>
            <person name="Wagner M."/>
            <person name="Wheeler J."/>
            <person name="Wu K."/>
            <person name="Xie G."/>
            <person name="Yang J."/>
            <person name="Dubchak I."/>
            <person name="Furey T.S."/>
            <person name="DeJong P."/>
            <person name="Dickson M."/>
            <person name="Gordon D."/>
            <person name="Eichler E.E."/>
            <person name="Pennacchio L.A."/>
            <person name="Richardson P."/>
            <person name="Stubbs L."/>
            <person name="Rokhsar D.S."/>
            <person name="Myers R.M."/>
            <person name="Rubin E.M."/>
            <person name="Lucas S.M."/>
        </authorList>
    </citation>
    <scope>NUCLEOTIDE SEQUENCE [LARGE SCALE GENOMIC DNA]</scope>
</reference>
<reference key="5">
    <citation type="journal article" date="2004" name="Genome Res.">
        <title>The status, quality, and expansion of the NIH full-length cDNA project: the Mammalian Gene Collection (MGC).</title>
        <authorList>
            <consortium name="The MGC Project Team"/>
        </authorList>
    </citation>
    <scope>NUCLEOTIDE SEQUENCE [LARGE SCALE MRNA] (ISOFORM 1)</scope>
    <scope>VARIANTS PHE-157 AND HIS-251</scope>
    <source>
        <tissue>Brain</tissue>
    </source>
</reference>
<reference key="6">
    <citation type="journal article" date="1995" name="Genomics">
        <title>Isolation and fine mapping of 16 novel human zinc finger-encoding cDNAs identify putative candidate genes for developmental and malignant disorders.</title>
        <authorList>
            <person name="Tommerup N."/>
            <person name="Vissing H."/>
        </authorList>
    </citation>
    <scope>NUCLEOTIDE SEQUENCE [MRNA] OF 326-464 (ISOFORM 1/2)</scope>
    <source>
        <tissue>Insulinoma</tissue>
    </source>
</reference>
<reference key="7">
    <citation type="journal article" date="2006" name="Science">
        <title>The consensus coding sequences of human breast and colorectal cancers.</title>
        <authorList>
            <person name="Sjoeblom T."/>
            <person name="Jones S."/>
            <person name="Wood L.D."/>
            <person name="Parsons D.W."/>
            <person name="Lin J."/>
            <person name="Barber T.D."/>
            <person name="Mandelker D."/>
            <person name="Leary R.J."/>
            <person name="Ptak J."/>
            <person name="Silliman N."/>
            <person name="Szabo S."/>
            <person name="Buckhaults P."/>
            <person name="Farrell C."/>
            <person name="Meeh P."/>
            <person name="Markowitz S.D."/>
            <person name="Willis J."/>
            <person name="Dawson D."/>
            <person name="Willson J.K.V."/>
            <person name="Gazdar A.F."/>
            <person name="Hartigan J."/>
            <person name="Wu L."/>
            <person name="Liu C."/>
            <person name="Parmigiani G."/>
            <person name="Park B.H."/>
            <person name="Bachman K.E."/>
            <person name="Papadopoulos N."/>
            <person name="Vogelstein B."/>
            <person name="Kinzler K.W."/>
            <person name="Velculescu V.E."/>
        </authorList>
    </citation>
    <scope>VARIANT [LARGE SCALE ANALYSIS] ARG-474</scope>
</reference>
<evidence type="ECO:0000255" key="1">
    <source>
        <dbReference type="PROSITE-ProRule" id="PRU00042"/>
    </source>
</evidence>
<evidence type="ECO:0000255" key="2">
    <source>
        <dbReference type="PROSITE-ProRule" id="PRU00119"/>
    </source>
</evidence>
<evidence type="ECO:0000269" key="3">
    <source>
    </source>
</evidence>
<evidence type="ECO:0000269" key="4">
    <source>
    </source>
</evidence>
<evidence type="ECO:0000269" key="5">
    <source>
    </source>
</evidence>
<evidence type="ECO:0000269" key="6">
    <source>
    </source>
</evidence>
<evidence type="ECO:0000269" key="7">
    <source ref="2"/>
</evidence>
<evidence type="ECO:0000303" key="8">
    <source>
    </source>
</evidence>
<evidence type="ECO:0000305" key="9"/>
<accession>Q12901</accession>
<accession>A2BDE6</accession>
<accession>B2RB63</accession>
<accession>B4DM95</accession>
<accession>J3KQ08</accession>
<accession>Q6AZZ8</accession>
<accession>Q9UIE1</accession>
<accession>Q9UK14</accession>
<sequence>MTTFKEAVTFKDVAVVFTEEELGLLDPAQRKLYRDVMLENFRNLLSVGHQPFHQDTCHFLREEKFWMMGTATQREGNSGGKIQTELESVPEAGAHEEWSCQQIWEQIAKDLTRSQDSIINNSQFFENGDVPSQVEAGLPTIHTGQKPSQGGKCKQSISDVPIFDLPQQLYSEEKSYTCDECGKSICYISALHVHQRVHVGEKLFMCDVCGKEFSQSSHLQTHQRVHTGEKPFKCEQCGKGFSRRSALNVHRKLHTGEKPYICEACGKAFIHDSQLKEHKRIHTGEKPFKCDICGKTFYFRSRLKSHSMVHTGEKPFRCDTCDKSFHQRSALNRHCMVHTGEKPYRCEQCGKGFIGRLDFYKHQVVHTGEKPYNCKECGKSFRWSSCLLNHQRVHSGEKSFKCEECGKGFYTNSQLSSHQRSHSGEKPYKCEECGKGYVTKFNLDLHQRVHTGERPYNCKECGKNFSRASSILNHKRLHCQKKPFKCEDCGKRLVHRTYRKDQPRDYSGENPSKCEDCGRRYKRRLNLDILLSLFLNDT</sequence>